<organism>
    <name type="scientific">Citrobacter freundii</name>
    <dbReference type="NCBI Taxonomy" id="546"/>
    <lineage>
        <taxon>Bacteria</taxon>
        <taxon>Pseudomonadati</taxon>
        <taxon>Pseudomonadota</taxon>
        <taxon>Gammaproteobacteria</taxon>
        <taxon>Enterobacterales</taxon>
        <taxon>Enterobacteriaceae</taxon>
        <taxon>Citrobacter</taxon>
        <taxon>Citrobacter freundii complex</taxon>
    </lineage>
</organism>
<sequence length="610" mass="64164">MRYIAGIDIGNSSTEVALATLDESGALSITGSALAETTGIKGTLRNVFGIQEALSLAAKNAGINVSDISLIRINEATPVIGDVAMETITETIITESTMIGHNPKTPGGVGLGVGVTITPEDLLSRPADTPYILVVSSAFDFADVATMINASVRAGYQLTGVILQQDDGVLVSNRLTHPLPIVDEVLHIDRIPLGMLAAIEVAIPGKVIETLSNPYGIATVFGLNADETKNIVPMARALIGNRSAVVVKTPSGDVKARAIPAGNLELQSQGRTVRVDVAAGAEAIMKAVGECPKLDNVTGEAGTNIGGMLEHVRQTMAELTNKPSHEIFIQDLLAVDTSVPVSVTGGLAGEFSLEQAVGIASMVKSDRLQMAMIAQEITQKLNIDVQVGGAEAEAAILGALTTPGTTRPLAILDLGAGSTDASIINPKGEIIATHLAGAGDMVTMIIARELGLEDRYLAEEIKKYPLAKVESLFHLRHEDGSVQFFPTPLPPTVFARVCVVKPDELVPLPGELALEKVRAIRRSAKERVFVTNALRALRQVSPTGNIRDIPFVVLVGGSSLDFEVPQLVTDALAHYRLVAGRGNIRGTEGPRNAVATGLILSWYKAFAHGK</sequence>
<keyword id="KW-0067">ATP-binding</keyword>
<keyword id="KW-1283">Bacterial microcompartment</keyword>
<keyword id="KW-0143">Chaperone</keyword>
<keyword id="KW-0378">Hydrolase</keyword>
<keyword id="KW-0460">Magnesium</keyword>
<keyword id="KW-0479">Metal-binding</keyword>
<keyword id="KW-0547">Nucleotide-binding</keyword>
<name>PDUG_CITFR</name>
<reference key="1">
    <citation type="journal article" date="2008" name="J. Biol. Chem.">
        <title>Biochemical and Structural Insights into Bacterial Organelle Form and Biogenesis.</title>
        <authorList>
            <person name="Parsons J.B."/>
            <person name="Dinesh S.D."/>
            <person name="Deery E."/>
            <person name="Leech H.K."/>
            <person name="Brindley A.A."/>
            <person name="Heldt D."/>
            <person name="Frank S."/>
            <person name="Smales C.M."/>
            <person name="Lunsdorf H."/>
            <person name="Rambach A."/>
            <person name="Gass M.H."/>
            <person name="Bleloch A."/>
            <person name="McClean K.J."/>
            <person name="Munro A.W."/>
            <person name="Rigby S.E.J."/>
            <person name="Warren M.J."/>
            <person name="Prentice M.B."/>
        </authorList>
    </citation>
    <scope>NUCLEOTIDE SEQUENCE [GENOMIC DNA]</scope>
    <scope>FUNCTION</scope>
    <scope>PATHWAY</scope>
</reference>
<evidence type="ECO:0000250" key="1">
    <source>
        <dbReference type="UniProtKB" id="O31043"/>
    </source>
</evidence>
<evidence type="ECO:0000250" key="2">
    <source>
        <dbReference type="UniProtKB" id="O68195"/>
    </source>
</evidence>
<evidence type="ECO:0000269" key="3">
    <source>
    </source>
</evidence>
<evidence type="ECO:0000303" key="4">
    <source>
    </source>
</evidence>
<evidence type="ECO:0000305" key="5"/>
<comment type="function">
    <text evidence="2">Large subunit of the propanediol dehydratase-reactivating factor (DDR), which reactivates suicidally inhibited adenosylcobalamin-dependent propanediol dehydratase (diol dehydratase, DDH) found in the bacterial microcompartment (BMC) dedicated to 1,2-propanediol (1,2-PD) degradation. Reactivates inactivated DDH in the presence of ATP, Mg(2+) and free adenosylcobalamin (AdoCbl), by mediating the exchange of the tightly bound damaged cofactor AdoCbl for a free intact one. This subunit contains the adenosine nucleotide binding site.</text>
</comment>
<comment type="function">
    <text evidence="3">Expression of a cosmid containing the full 21-gene pdu operon in E.coli allows E.coli to grow on 1,2-propanediol (1,2-PD) with the appearance of bacterial microcompartments (BMC) in its cytoplasm.</text>
</comment>
<comment type="function">
    <text evidence="5">The 1,2-PD-specific bacterial microcompartment (BMC) concentrates low levels of 1,2-PD catabolic enzymes, concentrates volatile reaction intermediates thus enhancing pathway flux and keeps the level of toxic, mutagenic propionaldehyde low.</text>
</comment>
<comment type="catalytic activity">
    <reaction evidence="2">
        <text>ATP + H2O = ADP + phosphate + H(+)</text>
        <dbReference type="Rhea" id="RHEA:13065"/>
        <dbReference type="ChEBI" id="CHEBI:15377"/>
        <dbReference type="ChEBI" id="CHEBI:15378"/>
        <dbReference type="ChEBI" id="CHEBI:30616"/>
        <dbReference type="ChEBI" id="CHEBI:43474"/>
        <dbReference type="ChEBI" id="CHEBI:456216"/>
    </reaction>
</comment>
<comment type="cofactor">
    <cofactor evidence="2">
        <name>Mg(2+)</name>
        <dbReference type="ChEBI" id="CHEBI:18420"/>
    </cofactor>
</comment>
<comment type="pathway">
    <text evidence="3">Polyol metabolism; 1,2-propanediol degradation.</text>
</comment>
<comment type="subunit">
    <text evidence="2">Forms a heterotetramer PduG(2)/PduH(2).</text>
</comment>
<comment type="subcellular location">
    <subcellularLocation>
        <location evidence="1">Bacterial microcompartment</location>
    </subcellularLocation>
</comment>
<comment type="similarity">
    <text evidence="5">Belongs to the DdrA/PduG family.</text>
</comment>
<protein>
    <recommendedName>
        <fullName evidence="2 4">Propanediol dehydratase-reactivating factor large subunit</fullName>
        <shortName>DDR large subunit</shortName>
    </recommendedName>
    <alternativeName>
        <fullName>Propanediol utilization protein PduG</fullName>
    </alternativeName>
</protein>
<proteinExistence type="inferred from homology"/>
<accession>B1VB67</accession>
<feature type="chain" id="PRO_0000454261" description="Propanediol dehydratase-reactivating factor large subunit">
    <location>
        <begin position="1"/>
        <end position="610"/>
    </location>
</feature>
<feature type="binding site" evidence="2">
    <location>
        <begin position="11"/>
        <end position="13"/>
    </location>
    <ligand>
        <name>ATP</name>
        <dbReference type="ChEBI" id="CHEBI:30616"/>
    </ligand>
</feature>
<feature type="binding site" evidence="2">
    <location>
        <position position="105"/>
    </location>
    <ligand>
        <name>Mg(2+)</name>
        <dbReference type="ChEBI" id="CHEBI:18420"/>
    </ligand>
</feature>
<feature type="binding site" evidence="2">
    <location>
        <position position="166"/>
    </location>
    <ligand>
        <name>Mg(2+)</name>
        <dbReference type="ChEBI" id="CHEBI:18420"/>
    </ligand>
</feature>
<feature type="binding site" evidence="2">
    <location>
        <position position="183"/>
    </location>
    <ligand>
        <name>Mg(2+)</name>
        <dbReference type="ChEBI" id="CHEBI:18420"/>
    </ligand>
</feature>
<feature type="binding site" evidence="2">
    <location>
        <begin position="459"/>
        <end position="462"/>
    </location>
    <ligand>
        <name>ATP</name>
        <dbReference type="ChEBI" id="CHEBI:30616"/>
    </ligand>
</feature>
<feature type="binding site" evidence="2">
    <location>
        <begin position="557"/>
        <end position="558"/>
    </location>
    <ligand>
        <name>ATP</name>
        <dbReference type="ChEBI" id="CHEBI:30616"/>
    </ligand>
</feature>
<feature type="binding site" evidence="2">
    <location>
        <position position="591"/>
    </location>
    <ligand>
        <name>ATP</name>
        <dbReference type="ChEBI" id="CHEBI:30616"/>
    </ligand>
</feature>
<gene>
    <name evidence="4" type="primary">pduG</name>
</gene>
<dbReference type="EMBL" id="AM498294">
    <property type="protein sequence ID" value="CAM57288.1"/>
    <property type="molecule type" value="Genomic_DNA"/>
</dbReference>
<dbReference type="SMR" id="B1VB67"/>
<dbReference type="UniPathway" id="UPA00621"/>
<dbReference type="GO" id="GO:0031469">
    <property type="term" value="C:bacterial microcompartment"/>
    <property type="evidence" value="ECO:0007669"/>
    <property type="project" value="UniProtKB-SubCell"/>
</dbReference>
<dbReference type="GO" id="GO:0005524">
    <property type="term" value="F:ATP binding"/>
    <property type="evidence" value="ECO:0007669"/>
    <property type="project" value="UniProtKB-KW"/>
</dbReference>
<dbReference type="GO" id="GO:0016787">
    <property type="term" value="F:hydrolase activity"/>
    <property type="evidence" value="ECO:0007669"/>
    <property type="project" value="UniProtKB-KW"/>
</dbReference>
<dbReference type="GO" id="GO:0046872">
    <property type="term" value="F:metal ion binding"/>
    <property type="evidence" value="ECO:0007669"/>
    <property type="project" value="UniProtKB-KW"/>
</dbReference>
<dbReference type="GO" id="GO:0051144">
    <property type="term" value="P:propanediol catabolic process"/>
    <property type="evidence" value="ECO:0007669"/>
    <property type="project" value="UniProtKB-UniPathway"/>
</dbReference>
<dbReference type="Gene3D" id="3.30.420.40">
    <property type="match status" value="2"/>
</dbReference>
<dbReference type="Gene3D" id="3.90.470.30">
    <property type="match status" value="1"/>
</dbReference>
<dbReference type="Gene3D" id="2.40.50.140">
    <property type="entry name" value="Nucleic acid-binding proteins"/>
    <property type="match status" value="1"/>
</dbReference>
<dbReference type="Gene3D" id="3.50.30.70">
    <property type="entry name" value="Swiveling domain of dehydratase reactivase alpha subunit"/>
    <property type="match status" value="1"/>
</dbReference>
<dbReference type="InterPro" id="IPR043129">
    <property type="entry name" value="ATPase_NBD"/>
</dbReference>
<dbReference type="InterPro" id="IPR030994">
    <property type="entry name" value="DDR_dom"/>
</dbReference>
<dbReference type="InterPro" id="IPR040916">
    <property type="entry name" value="DDR_swiveling"/>
</dbReference>
<dbReference type="InterPro" id="IPR009191">
    <property type="entry name" value="DDRA"/>
</dbReference>
<dbReference type="InterPro" id="IPR028975">
    <property type="entry name" value="DDRA_swiveling_dom_sf"/>
</dbReference>
<dbReference type="InterPro" id="IPR012340">
    <property type="entry name" value="NA-bd_OB-fold"/>
</dbReference>
<dbReference type="NCBIfam" id="TIGR04491">
    <property type="entry name" value="reactive_PduG"/>
    <property type="match status" value="1"/>
</dbReference>
<dbReference type="Pfam" id="PF08841">
    <property type="entry name" value="DDR"/>
    <property type="match status" value="1"/>
</dbReference>
<dbReference type="Pfam" id="PF18427">
    <property type="entry name" value="DDR_swiveling"/>
    <property type="match status" value="1"/>
</dbReference>
<dbReference type="PIRSF" id="PIRSF011502">
    <property type="entry name" value="DdrA_PduG"/>
    <property type="match status" value="1"/>
</dbReference>
<dbReference type="SUPFAM" id="SSF53067">
    <property type="entry name" value="Actin-like ATPase domain"/>
    <property type="match status" value="2"/>
</dbReference>
<dbReference type="SUPFAM" id="SSF82317">
    <property type="entry name" value="Swiveling domain of dehydratase reactivase alpha subunit"/>
    <property type="match status" value="1"/>
</dbReference>